<reference key="1">
    <citation type="submission" date="2004-11" db="EMBL/GenBank/DDBJ databases">
        <authorList>
            <consortium name="The German cDNA consortium"/>
        </authorList>
    </citation>
    <scope>NUCLEOTIDE SEQUENCE [LARGE SCALE MRNA]</scope>
    <source>
        <tissue>Kidney</tissue>
    </source>
</reference>
<protein>
    <recommendedName>
        <fullName>V-type proton ATPase subunit D</fullName>
        <shortName>V-ATPase subunit D</shortName>
    </recommendedName>
    <alternativeName>
        <fullName>Vacuolar proton pump subunit D</fullName>
    </alternativeName>
</protein>
<feature type="chain" id="PRO_0000144233" description="V-type proton ATPase subunit D">
    <location>
        <begin position="1"/>
        <end position="247"/>
    </location>
</feature>
<organism>
    <name type="scientific">Pongo abelii</name>
    <name type="common">Sumatran orangutan</name>
    <name type="synonym">Pongo pygmaeus abelii</name>
    <dbReference type="NCBI Taxonomy" id="9601"/>
    <lineage>
        <taxon>Eukaryota</taxon>
        <taxon>Metazoa</taxon>
        <taxon>Chordata</taxon>
        <taxon>Craniata</taxon>
        <taxon>Vertebrata</taxon>
        <taxon>Euteleostomi</taxon>
        <taxon>Mammalia</taxon>
        <taxon>Eutheria</taxon>
        <taxon>Euarchontoglires</taxon>
        <taxon>Primates</taxon>
        <taxon>Haplorrhini</taxon>
        <taxon>Catarrhini</taxon>
        <taxon>Hominidae</taxon>
        <taxon>Pongo</taxon>
    </lineage>
</organism>
<dbReference type="EMBL" id="CR858190">
    <property type="protein sequence ID" value="CAH90429.1"/>
    <property type="molecule type" value="mRNA"/>
</dbReference>
<dbReference type="RefSeq" id="NP_001125215.1">
    <property type="nucleotide sequence ID" value="NM_001131743.1"/>
</dbReference>
<dbReference type="SMR" id="Q5RCS8"/>
<dbReference type="FunCoup" id="Q5RCS8">
    <property type="interactions" value="2003"/>
</dbReference>
<dbReference type="STRING" id="9601.ENSPPYP00000006728"/>
<dbReference type="Ensembl" id="ENSPPYT00000006993.2">
    <property type="protein sequence ID" value="ENSPPYP00000006728.1"/>
    <property type="gene ID" value="ENSPPYG00000005920.2"/>
</dbReference>
<dbReference type="GeneID" id="100172107"/>
<dbReference type="KEGG" id="pon:100172107"/>
<dbReference type="CTD" id="51382"/>
<dbReference type="eggNOG" id="KOG1647">
    <property type="taxonomic scope" value="Eukaryota"/>
</dbReference>
<dbReference type="GeneTree" id="ENSGT00390000010770"/>
<dbReference type="HOGENOM" id="CLU_069688_0_0_1"/>
<dbReference type="InParanoid" id="Q5RCS8"/>
<dbReference type="OMA" id="REEFFRM"/>
<dbReference type="OrthoDB" id="7676488at2759"/>
<dbReference type="TreeFam" id="TF300160"/>
<dbReference type="Proteomes" id="UP000001595">
    <property type="component" value="Chromosome 14"/>
</dbReference>
<dbReference type="GO" id="GO:0005813">
    <property type="term" value="C:centrosome"/>
    <property type="evidence" value="ECO:0007669"/>
    <property type="project" value="UniProtKB-SubCell"/>
</dbReference>
<dbReference type="GO" id="GO:0005929">
    <property type="term" value="C:cilium"/>
    <property type="evidence" value="ECO:0007669"/>
    <property type="project" value="UniProtKB-SubCell"/>
</dbReference>
<dbReference type="GO" id="GO:0030665">
    <property type="term" value="C:clathrin-coated vesicle membrane"/>
    <property type="evidence" value="ECO:0007669"/>
    <property type="project" value="UniProtKB-SubCell"/>
</dbReference>
<dbReference type="GO" id="GO:0005654">
    <property type="term" value="C:nucleoplasm"/>
    <property type="evidence" value="ECO:0007669"/>
    <property type="project" value="Ensembl"/>
</dbReference>
<dbReference type="GO" id="GO:0005886">
    <property type="term" value="C:plasma membrane"/>
    <property type="evidence" value="ECO:0007669"/>
    <property type="project" value="Ensembl"/>
</dbReference>
<dbReference type="GO" id="GO:0098793">
    <property type="term" value="C:presynapse"/>
    <property type="evidence" value="ECO:0007669"/>
    <property type="project" value="GOC"/>
</dbReference>
<dbReference type="GO" id="GO:0000221">
    <property type="term" value="C:vacuolar proton-transporting V-type ATPase, V1 domain"/>
    <property type="evidence" value="ECO:0000250"/>
    <property type="project" value="UniProtKB"/>
</dbReference>
<dbReference type="GO" id="GO:0046961">
    <property type="term" value="F:proton-transporting ATPase activity, rotational mechanism"/>
    <property type="evidence" value="ECO:0007669"/>
    <property type="project" value="InterPro"/>
</dbReference>
<dbReference type="GO" id="GO:0060271">
    <property type="term" value="P:cilium assembly"/>
    <property type="evidence" value="ECO:0000250"/>
    <property type="project" value="UniProtKB"/>
</dbReference>
<dbReference type="GO" id="GO:0061512">
    <property type="term" value="P:protein localization to cilium"/>
    <property type="evidence" value="ECO:0000250"/>
    <property type="project" value="UniProtKB"/>
</dbReference>
<dbReference type="GO" id="GO:0097401">
    <property type="term" value="P:synaptic vesicle lumen acidification"/>
    <property type="evidence" value="ECO:0007669"/>
    <property type="project" value="Ensembl"/>
</dbReference>
<dbReference type="FunFam" id="1.10.287.3240:FF:000001">
    <property type="entry name" value="V-type proton ATPase subunit D"/>
    <property type="match status" value="1"/>
</dbReference>
<dbReference type="Gene3D" id="1.10.287.3240">
    <property type="match status" value="1"/>
</dbReference>
<dbReference type="InterPro" id="IPR002699">
    <property type="entry name" value="V_ATPase_D"/>
</dbReference>
<dbReference type="NCBIfam" id="TIGR00309">
    <property type="entry name" value="V_ATPase_subD"/>
    <property type="match status" value="1"/>
</dbReference>
<dbReference type="PANTHER" id="PTHR11671">
    <property type="entry name" value="V-TYPE ATP SYNTHASE SUBUNIT D"/>
    <property type="match status" value="1"/>
</dbReference>
<dbReference type="Pfam" id="PF01813">
    <property type="entry name" value="ATP-synt_D"/>
    <property type="match status" value="1"/>
</dbReference>
<evidence type="ECO:0000250" key="1">
    <source>
        <dbReference type="UniProtKB" id="P39942"/>
    </source>
</evidence>
<evidence type="ECO:0000250" key="2">
    <source>
        <dbReference type="UniProtKB" id="Q9Y5K8"/>
    </source>
</evidence>
<evidence type="ECO:0000305" key="3"/>
<gene>
    <name type="primary">ATP6V1D</name>
</gene>
<sequence>MSGKDRIEIFPSRMAQTIMKARLKGAQTGRNLLKKKSDALTLRFRQILKKIIETKMLMGEVMREAAFSLAEAKFTAGDFSTTVIQNVNKAQVKIRAKKDNVAGVTLPVFEHYHEGTDSYELTGLARGGEQLAKLKRNYAKAVELLVELASLQTSFVTLDEAIKITNRRVNAIEHVIIPRIERTLAYIITELDEREREEFYRLKKIQEKKKILKEKSEKDLEQRRAAGEVLEPANLLAEEKDEDLLFE</sequence>
<name>VATD_PONAB</name>
<keyword id="KW-0966">Cell projection</keyword>
<keyword id="KW-0970">Cilium biogenesis/degradation</keyword>
<keyword id="KW-0963">Cytoplasm</keyword>
<keyword id="KW-0968">Cytoplasmic vesicle</keyword>
<keyword id="KW-0206">Cytoskeleton</keyword>
<keyword id="KW-0375">Hydrogen ion transport</keyword>
<keyword id="KW-0406">Ion transport</keyword>
<keyword id="KW-0472">Membrane</keyword>
<keyword id="KW-1185">Reference proteome</keyword>
<keyword id="KW-0813">Transport</keyword>
<proteinExistence type="evidence at transcript level"/>
<accession>Q5RCS8</accession>
<comment type="function">
    <text evidence="1 2">Subunit of the V1 complex of vacuolar(H+)-ATPase (V-ATPase), a multisubunit enzyme composed of a peripheral complex (V1) that hydrolyzes ATP and a membrane integral complex (V0) that translocates protons (By similarity). V-ATPase is responsible for acidifying and maintaining the pH of intracellular compartments and in some cell types, is targeted to the plasma membrane, where it is responsible for acidifying the extracellular environment (By similarity). May play a role in cilium biogenesis through regulation of the transport and the localization of proteins to the cilium (By similarity).</text>
</comment>
<comment type="subunit">
    <text evidence="2">V-ATPase is a heteromultimeric enzyme made up of two complexes: the ATP-hydrolytic V1 complex and the proton translocation V0 complex (By similarity). The V1 complex consists of three catalytic AB heterodimers that form a heterohexamer, three peripheral stalks each consisting of EG heterodimers, one central rotor including subunits D and F, and the regulatory subunits C and H (By similarity). The proton translocation complex V0 consists of the proton transport subunit a, a ring of proteolipid subunits c9c'', rotary subunit d, subunits e and f, and the accessory subunits ATP6AP1/Ac45 and ATP6AP2/PRR (By similarity). Interacts with SNX10 (By similarity).</text>
</comment>
<comment type="subcellular location">
    <subcellularLocation>
        <location evidence="2">Membrane</location>
        <topology evidence="2">Peripheral membrane protein</topology>
        <orientation evidence="2">Cytoplasmic side</orientation>
    </subcellularLocation>
    <subcellularLocation>
        <location evidence="1">Cytoplasmic vesicle</location>
        <location evidence="1">Clathrin-coated vesicle membrane</location>
        <topology evidence="3">Peripheral membrane protein</topology>
    </subcellularLocation>
    <subcellularLocation>
        <location evidence="2">Cytoplasm</location>
        <location evidence="2">Cytoskeleton</location>
        <location evidence="2">Microtubule organizing center</location>
        <location evidence="2">Centrosome</location>
    </subcellularLocation>
    <subcellularLocation>
        <location evidence="2">Cell projection</location>
        <location evidence="2">Cilium</location>
    </subcellularLocation>
    <text evidence="2">Localizes to centrosome and the base of the cilium.</text>
</comment>
<comment type="similarity">
    <text evidence="3">Belongs to the V-ATPase D subunit family.</text>
</comment>